<name>PYRB_RENSM</name>
<evidence type="ECO:0000255" key="1">
    <source>
        <dbReference type="HAMAP-Rule" id="MF_00001"/>
    </source>
</evidence>
<evidence type="ECO:0000256" key="2">
    <source>
        <dbReference type="SAM" id="MobiDB-lite"/>
    </source>
</evidence>
<comment type="function">
    <text evidence="1">Catalyzes the condensation of carbamoyl phosphate and aspartate to form carbamoyl aspartate and inorganic phosphate, the committed step in the de novo pyrimidine nucleotide biosynthesis pathway.</text>
</comment>
<comment type="catalytic activity">
    <reaction evidence="1">
        <text>carbamoyl phosphate + L-aspartate = N-carbamoyl-L-aspartate + phosphate + H(+)</text>
        <dbReference type="Rhea" id="RHEA:20013"/>
        <dbReference type="ChEBI" id="CHEBI:15378"/>
        <dbReference type="ChEBI" id="CHEBI:29991"/>
        <dbReference type="ChEBI" id="CHEBI:32814"/>
        <dbReference type="ChEBI" id="CHEBI:43474"/>
        <dbReference type="ChEBI" id="CHEBI:58228"/>
        <dbReference type="EC" id="2.1.3.2"/>
    </reaction>
</comment>
<comment type="pathway">
    <text evidence="1">Pyrimidine metabolism; UMP biosynthesis via de novo pathway; (S)-dihydroorotate from bicarbonate: step 2/3.</text>
</comment>
<comment type="subunit">
    <text evidence="1">Heterododecamer (2C3:3R2) of six catalytic PyrB chains organized as two trimers (C3), and six regulatory PyrI chains organized as three dimers (R2).</text>
</comment>
<comment type="similarity">
    <text evidence="1">Belongs to the aspartate/ornithine carbamoyltransferase superfamily. ATCase family.</text>
</comment>
<dbReference type="EC" id="2.1.3.2" evidence="1"/>
<dbReference type="EMBL" id="CP000910">
    <property type="protein sequence ID" value="ABY23700.1"/>
    <property type="molecule type" value="Genomic_DNA"/>
</dbReference>
<dbReference type="RefSeq" id="WP_012245370.1">
    <property type="nucleotide sequence ID" value="NC_010168.1"/>
</dbReference>
<dbReference type="SMR" id="A9WSB2"/>
<dbReference type="STRING" id="288705.RSal33209_1967"/>
<dbReference type="KEGG" id="rsa:RSal33209_1967"/>
<dbReference type="eggNOG" id="COG0540">
    <property type="taxonomic scope" value="Bacteria"/>
</dbReference>
<dbReference type="HOGENOM" id="CLU_043846_2_0_11"/>
<dbReference type="UniPathway" id="UPA00070">
    <property type="reaction ID" value="UER00116"/>
</dbReference>
<dbReference type="Proteomes" id="UP000002007">
    <property type="component" value="Chromosome"/>
</dbReference>
<dbReference type="GO" id="GO:0005829">
    <property type="term" value="C:cytosol"/>
    <property type="evidence" value="ECO:0007669"/>
    <property type="project" value="TreeGrafter"/>
</dbReference>
<dbReference type="GO" id="GO:0016597">
    <property type="term" value="F:amino acid binding"/>
    <property type="evidence" value="ECO:0007669"/>
    <property type="project" value="InterPro"/>
</dbReference>
<dbReference type="GO" id="GO:0004070">
    <property type="term" value="F:aspartate carbamoyltransferase activity"/>
    <property type="evidence" value="ECO:0007669"/>
    <property type="project" value="UniProtKB-UniRule"/>
</dbReference>
<dbReference type="GO" id="GO:0006207">
    <property type="term" value="P:'de novo' pyrimidine nucleobase biosynthetic process"/>
    <property type="evidence" value="ECO:0007669"/>
    <property type="project" value="InterPro"/>
</dbReference>
<dbReference type="GO" id="GO:0044205">
    <property type="term" value="P:'de novo' UMP biosynthetic process"/>
    <property type="evidence" value="ECO:0007669"/>
    <property type="project" value="UniProtKB-UniRule"/>
</dbReference>
<dbReference type="GO" id="GO:0006520">
    <property type="term" value="P:amino acid metabolic process"/>
    <property type="evidence" value="ECO:0007669"/>
    <property type="project" value="InterPro"/>
</dbReference>
<dbReference type="FunFam" id="3.40.50.1370:FF:000007">
    <property type="entry name" value="Aspartate carbamoyltransferase"/>
    <property type="match status" value="1"/>
</dbReference>
<dbReference type="FunFam" id="3.40.50.1370:FF:000012">
    <property type="entry name" value="Aspartate carbamoyltransferase"/>
    <property type="match status" value="1"/>
</dbReference>
<dbReference type="Gene3D" id="3.40.50.1370">
    <property type="entry name" value="Aspartate/ornithine carbamoyltransferase"/>
    <property type="match status" value="2"/>
</dbReference>
<dbReference type="HAMAP" id="MF_00001">
    <property type="entry name" value="Asp_carb_tr"/>
    <property type="match status" value="1"/>
</dbReference>
<dbReference type="InterPro" id="IPR006132">
    <property type="entry name" value="Asp/Orn_carbamoyltranf_P-bd"/>
</dbReference>
<dbReference type="InterPro" id="IPR006130">
    <property type="entry name" value="Asp/Orn_carbamoylTrfase"/>
</dbReference>
<dbReference type="InterPro" id="IPR036901">
    <property type="entry name" value="Asp/Orn_carbamoylTrfase_sf"/>
</dbReference>
<dbReference type="InterPro" id="IPR002082">
    <property type="entry name" value="Asp_carbamoyltransf"/>
</dbReference>
<dbReference type="InterPro" id="IPR006131">
    <property type="entry name" value="Asp_carbamoyltransf_Asp/Orn-bd"/>
</dbReference>
<dbReference type="NCBIfam" id="TIGR00670">
    <property type="entry name" value="asp_carb_tr"/>
    <property type="match status" value="1"/>
</dbReference>
<dbReference type="NCBIfam" id="NF002032">
    <property type="entry name" value="PRK00856.1"/>
    <property type="match status" value="1"/>
</dbReference>
<dbReference type="PANTHER" id="PTHR45753:SF6">
    <property type="entry name" value="ASPARTATE CARBAMOYLTRANSFERASE"/>
    <property type="match status" value="1"/>
</dbReference>
<dbReference type="PANTHER" id="PTHR45753">
    <property type="entry name" value="ORNITHINE CARBAMOYLTRANSFERASE, MITOCHONDRIAL"/>
    <property type="match status" value="1"/>
</dbReference>
<dbReference type="Pfam" id="PF00185">
    <property type="entry name" value="OTCace"/>
    <property type="match status" value="1"/>
</dbReference>
<dbReference type="Pfam" id="PF02729">
    <property type="entry name" value="OTCace_N"/>
    <property type="match status" value="1"/>
</dbReference>
<dbReference type="PRINTS" id="PR00100">
    <property type="entry name" value="AOTCASE"/>
</dbReference>
<dbReference type="PRINTS" id="PR00101">
    <property type="entry name" value="ATCASE"/>
</dbReference>
<dbReference type="SUPFAM" id="SSF53671">
    <property type="entry name" value="Aspartate/ornithine carbamoyltransferase"/>
    <property type="match status" value="1"/>
</dbReference>
<dbReference type="PROSITE" id="PS00097">
    <property type="entry name" value="CARBAMOYLTRANSFERASE"/>
    <property type="match status" value="1"/>
</dbReference>
<organism>
    <name type="scientific">Renibacterium salmoninarum (strain ATCC 33209 / DSM 20767 / JCM 11484 / NBRC 15589 / NCIMB 2235)</name>
    <dbReference type="NCBI Taxonomy" id="288705"/>
    <lineage>
        <taxon>Bacteria</taxon>
        <taxon>Bacillati</taxon>
        <taxon>Actinomycetota</taxon>
        <taxon>Actinomycetes</taxon>
        <taxon>Micrococcales</taxon>
        <taxon>Micrococcaceae</taxon>
        <taxon>Renibacterium</taxon>
    </lineage>
</organism>
<keyword id="KW-0665">Pyrimidine biosynthesis</keyword>
<keyword id="KW-1185">Reference proteome</keyword>
<keyword id="KW-0808">Transferase</keyword>
<feature type="chain" id="PRO_1000073738" description="Aspartate carbamoyltransferase catalytic subunit">
    <location>
        <begin position="1"/>
        <end position="343"/>
    </location>
</feature>
<feature type="region of interest" description="Disordered" evidence="2">
    <location>
        <begin position="323"/>
        <end position="343"/>
    </location>
</feature>
<feature type="binding site" evidence="1">
    <location>
        <position position="54"/>
    </location>
    <ligand>
        <name>carbamoyl phosphate</name>
        <dbReference type="ChEBI" id="CHEBI:58228"/>
    </ligand>
</feature>
<feature type="binding site" evidence="1">
    <location>
        <position position="55"/>
    </location>
    <ligand>
        <name>carbamoyl phosphate</name>
        <dbReference type="ChEBI" id="CHEBI:58228"/>
    </ligand>
</feature>
<feature type="binding site" evidence="1">
    <location>
        <position position="82"/>
    </location>
    <ligand>
        <name>L-aspartate</name>
        <dbReference type="ChEBI" id="CHEBI:29991"/>
    </ligand>
</feature>
<feature type="binding site" evidence="1">
    <location>
        <position position="104"/>
    </location>
    <ligand>
        <name>carbamoyl phosphate</name>
        <dbReference type="ChEBI" id="CHEBI:58228"/>
    </ligand>
</feature>
<feature type="binding site" evidence="1">
    <location>
        <position position="134"/>
    </location>
    <ligand>
        <name>carbamoyl phosphate</name>
        <dbReference type="ChEBI" id="CHEBI:58228"/>
    </ligand>
</feature>
<feature type="binding site" evidence="1">
    <location>
        <position position="137"/>
    </location>
    <ligand>
        <name>carbamoyl phosphate</name>
        <dbReference type="ChEBI" id="CHEBI:58228"/>
    </ligand>
</feature>
<feature type="binding site" evidence="1">
    <location>
        <position position="177"/>
    </location>
    <ligand>
        <name>L-aspartate</name>
        <dbReference type="ChEBI" id="CHEBI:29991"/>
    </ligand>
</feature>
<feature type="binding site" evidence="1">
    <location>
        <position position="232"/>
    </location>
    <ligand>
        <name>L-aspartate</name>
        <dbReference type="ChEBI" id="CHEBI:29991"/>
    </ligand>
</feature>
<feature type="binding site" evidence="1">
    <location>
        <position position="277"/>
    </location>
    <ligand>
        <name>carbamoyl phosphate</name>
        <dbReference type="ChEBI" id="CHEBI:58228"/>
    </ligand>
</feature>
<feature type="binding site" evidence="1">
    <location>
        <position position="278"/>
    </location>
    <ligand>
        <name>carbamoyl phosphate</name>
        <dbReference type="ChEBI" id="CHEBI:58228"/>
    </ligand>
</feature>
<reference key="1">
    <citation type="journal article" date="2008" name="J. Bacteriol.">
        <title>Genome sequence of the fish pathogen Renibacterium salmoninarum suggests reductive evolution away from an environmental Arthrobacter ancestor.</title>
        <authorList>
            <person name="Wiens G.D."/>
            <person name="Rockey D.D."/>
            <person name="Wu Z."/>
            <person name="Chang J."/>
            <person name="Levy R."/>
            <person name="Crane S."/>
            <person name="Chen D.S."/>
            <person name="Capri G.R."/>
            <person name="Burnett J.R."/>
            <person name="Sudheesh P.S."/>
            <person name="Schipma M.J."/>
            <person name="Burd H."/>
            <person name="Bhattacharyya A."/>
            <person name="Rhodes L.D."/>
            <person name="Kaul R."/>
            <person name="Strom M.S."/>
        </authorList>
    </citation>
    <scope>NUCLEOTIDE SEQUENCE [LARGE SCALE GENOMIC DNA]</scope>
    <source>
        <strain>ATCC 33209 / DSM 20767 / JCM 11484 / NBRC 15589 / NCIMB 2235</strain>
    </source>
</reference>
<gene>
    <name evidence="1" type="primary">pyrB</name>
    <name type="ordered locus">RSal33209_1967</name>
</gene>
<accession>A9WSB2</accession>
<protein>
    <recommendedName>
        <fullName evidence="1">Aspartate carbamoyltransferase catalytic subunit</fullName>
        <ecNumber evidence="1">2.1.3.2</ecNumber>
    </recommendedName>
    <alternativeName>
        <fullName evidence="1">Aspartate transcarbamylase</fullName>
        <shortName evidence="1">ATCase</shortName>
    </alternativeName>
</protein>
<proteinExistence type="inferred from homology"/>
<sequence>MKHLLSTHDLHRGAAIQILDTAEEMASVTEREVKKLPALRGRTVVNLFFEDSTRTRISFEAAAKRLSADVINFAAKGSSVSKGESLKDTAQTLEAMSADAVVIRHGASGAPQRLADSGWIDAAVINAGDGTHEHPTQALLDAFTMRRHWAKIFGVSSVGSDVAGMRVAIVGDVLHSRVARSNVWLLHTLGAQVTLVAPPTLLPIGVQTWPCAVSFDLDQTLDAGVDAVMMLRVQGERMHAAFFPSEREYSRRWGFDDARLARLDALGLDETIIMHPGPMNRGLEISSAAADSSRSTVLDQVRNGVSVRMAALYLLLSGGLQQPDQSNPQRNVTNTSNWQETKR</sequence>